<proteinExistence type="inferred from homology"/>
<comment type="function">
    <text evidence="1">Cell division inhibitor that blocks the formation of polar Z ring septums. Rapidly oscillates between the poles of the cell to destabilize FtsZ filaments that have formed before they mature into polar Z rings. Prevents FtsZ polymerization.</text>
</comment>
<comment type="subunit">
    <text evidence="1">Interacts with MinD and FtsZ.</text>
</comment>
<comment type="similarity">
    <text evidence="1">Belongs to the MinC family.</text>
</comment>
<sequence>MSHSPDLKGSSFTLSVLHLCNNSVDTAIEFVKEKVEQAPAFFAAAPVVINIANVEGDLDFVALKQGISQAGFIPVGITGAKDKRTQNLASDAGFAIMSASKSPTQAPAKMAPTKIVRTPIRSGQQIYAKDGDLVILNHVSAGAEVIADGSIHIHGTLRGRAIAGASGQKEARIICHDLQAELISIAGNYWLSDQIERQFWQQKVMLSLVDESLHLEALTQ</sequence>
<name>MINC_VIBVY</name>
<feature type="chain" id="PRO_0000189071" description="Probable septum site-determining protein MinC">
    <location>
        <begin position="1"/>
        <end position="220"/>
    </location>
</feature>
<accession>Q7MML0</accession>
<evidence type="ECO:0000255" key="1">
    <source>
        <dbReference type="HAMAP-Rule" id="MF_00267"/>
    </source>
</evidence>
<dbReference type="EMBL" id="BA000037">
    <property type="protein sequence ID" value="BAC93821.1"/>
    <property type="molecule type" value="Genomic_DNA"/>
</dbReference>
<dbReference type="RefSeq" id="WP_011078249.1">
    <property type="nucleotide sequence ID" value="NC_005139.1"/>
</dbReference>
<dbReference type="SMR" id="Q7MML0"/>
<dbReference type="STRING" id="672.VV93_v1c09800"/>
<dbReference type="KEGG" id="vvy:VV1057"/>
<dbReference type="eggNOG" id="COG0850">
    <property type="taxonomic scope" value="Bacteria"/>
</dbReference>
<dbReference type="HOGENOM" id="CLU_067812_0_1_6"/>
<dbReference type="Proteomes" id="UP000002675">
    <property type="component" value="Chromosome I"/>
</dbReference>
<dbReference type="GO" id="GO:0000902">
    <property type="term" value="P:cell morphogenesis"/>
    <property type="evidence" value="ECO:0007669"/>
    <property type="project" value="InterPro"/>
</dbReference>
<dbReference type="GO" id="GO:0000917">
    <property type="term" value="P:division septum assembly"/>
    <property type="evidence" value="ECO:0007669"/>
    <property type="project" value="UniProtKB-KW"/>
</dbReference>
<dbReference type="GO" id="GO:0051302">
    <property type="term" value="P:regulation of cell division"/>
    <property type="evidence" value="ECO:0007669"/>
    <property type="project" value="InterPro"/>
</dbReference>
<dbReference type="GO" id="GO:1901891">
    <property type="term" value="P:regulation of cell septum assembly"/>
    <property type="evidence" value="ECO:0007669"/>
    <property type="project" value="InterPro"/>
</dbReference>
<dbReference type="Gene3D" id="2.160.20.70">
    <property type="match status" value="1"/>
</dbReference>
<dbReference type="Gene3D" id="3.30.70.260">
    <property type="match status" value="1"/>
</dbReference>
<dbReference type="HAMAP" id="MF_00267">
    <property type="entry name" value="MinC"/>
    <property type="match status" value="1"/>
</dbReference>
<dbReference type="InterPro" id="IPR016098">
    <property type="entry name" value="CAP/MinC_C"/>
</dbReference>
<dbReference type="InterPro" id="IPR013033">
    <property type="entry name" value="MinC"/>
</dbReference>
<dbReference type="InterPro" id="IPR036145">
    <property type="entry name" value="MinC_C_sf"/>
</dbReference>
<dbReference type="InterPro" id="IPR007874">
    <property type="entry name" value="MinC_N"/>
</dbReference>
<dbReference type="InterPro" id="IPR005526">
    <property type="entry name" value="Septum_form_inhib_MinC_C"/>
</dbReference>
<dbReference type="NCBIfam" id="TIGR01222">
    <property type="entry name" value="minC"/>
    <property type="match status" value="1"/>
</dbReference>
<dbReference type="PANTHER" id="PTHR34108">
    <property type="entry name" value="SEPTUM SITE-DETERMINING PROTEIN MINC"/>
    <property type="match status" value="1"/>
</dbReference>
<dbReference type="PANTHER" id="PTHR34108:SF1">
    <property type="entry name" value="SEPTUM SITE-DETERMINING PROTEIN MINC"/>
    <property type="match status" value="1"/>
</dbReference>
<dbReference type="Pfam" id="PF03775">
    <property type="entry name" value="MinC_C"/>
    <property type="match status" value="1"/>
</dbReference>
<dbReference type="Pfam" id="PF05209">
    <property type="entry name" value="MinC_N"/>
    <property type="match status" value="1"/>
</dbReference>
<dbReference type="SUPFAM" id="SSF63848">
    <property type="entry name" value="Cell-division inhibitor MinC, C-terminal domain"/>
    <property type="match status" value="1"/>
</dbReference>
<reference key="1">
    <citation type="journal article" date="2003" name="Genome Res.">
        <title>Comparative genome analysis of Vibrio vulnificus, a marine pathogen.</title>
        <authorList>
            <person name="Chen C.-Y."/>
            <person name="Wu K.-M."/>
            <person name="Chang Y.-C."/>
            <person name="Chang C.-H."/>
            <person name="Tsai H.-C."/>
            <person name="Liao T.-L."/>
            <person name="Liu Y.-M."/>
            <person name="Chen H.-J."/>
            <person name="Shen A.B.-T."/>
            <person name="Li J.-C."/>
            <person name="Su T.-L."/>
            <person name="Shao C.-P."/>
            <person name="Lee C.-T."/>
            <person name="Hor L.-I."/>
            <person name="Tsai S.-F."/>
        </authorList>
    </citation>
    <scope>NUCLEOTIDE SEQUENCE [LARGE SCALE GENOMIC DNA]</scope>
    <source>
        <strain>YJ016</strain>
    </source>
</reference>
<protein>
    <recommendedName>
        <fullName evidence="1">Probable septum site-determining protein MinC</fullName>
    </recommendedName>
</protein>
<gene>
    <name evidence="1" type="primary">minC</name>
    <name type="ordered locus">VV1057</name>
</gene>
<keyword id="KW-0131">Cell cycle</keyword>
<keyword id="KW-0132">Cell division</keyword>
<keyword id="KW-0717">Septation</keyword>
<organism>
    <name type="scientific">Vibrio vulnificus (strain YJ016)</name>
    <dbReference type="NCBI Taxonomy" id="196600"/>
    <lineage>
        <taxon>Bacteria</taxon>
        <taxon>Pseudomonadati</taxon>
        <taxon>Pseudomonadota</taxon>
        <taxon>Gammaproteobacteria</taxon>
        <taxon>Vibrionales</taxon>
        <taxon>Vibrionaceae</taxon>
        <taxon>Vibrio</taxon>
    </lineage>
</organism>